<protein>
    <recommendedName>
        <fullName evidence="1">3-demethoxyubiquinol 3-hydroxylase</fullName>
        <shortName evidence="1">DMQ hydroxylase</shortName>
        <ecNumber evidence="1">1.14.99.60</ecNumber>
    </recommendedName>
    <alternativeName>
        <fullName evidence="1">2-nonaprenyl-3-methyl-6-methoxy-1,4-benzoquinol hydroxylase</fullName>
    </alternativeName>
</protein>
<organism>
    <name type="scientific">Acinetobacter baumannii (strain SDF)</name>
    <dbReference type="NCBI Taxonomy" id="509170"/>
    <lineage>
        <taxon>Bacteria</taxon>
        <taxon>Pseudomonadati</taxon>
        <taxon>Pseudomonadota</taxon>
        <taxon>Gammaproteobacteria</taxon>
        <taxon>Moraxellales</taxon>
        <taxon>Moraxellaceae</taxon>
        <taxon>Acinetobacter</taxon>
        <taxon>Acinetobacter calcoaceticus/baumannii complex</taxon>
    </lineage>
</organism>
<reference key="1">
    <citation type="journal article" date="2008" name="PLoS ONE">
        <title>Comparative analysis of Acinetobacters: three genomes for three lifestyles.</title>
        <authorList>
            <person name="Vallenet D."/>
            <person name="Nordmann P."/>
            <person name="Barbe V."/>
            <person name="Poirel L."/>
            <person name="Mangenot S."/>
            <person name="Bataille E."/>
            <person name="Dossat C."/>
            <person name="Gas S."/>
            <person name="Kreimeyer A."/>
            <person name="Lenoble P."/>
            <person name="Oztas S."/>
            <person name="Poulain J."/>
            <person name="Segurens B."/>
            <person name="Robert C."/>
            <person name="Abergel C."/>
            <person name="Claverie J.-M."/>
            <person name="Raoult D."/>
            <person name="Medigue C."/>
            <person name="Weissenbach J."/>
            <person name="Cruveiller S."/>
        </authorList>
    </citation>
    <scope>NUCLEOTIDE SEQUENCE [LARGE SCALE GENOMIC DNA]</scope>
    <source>
        <strain>SDF</strain>
    </source>
</reference>
<keyword id="KW-1003">Cell membrane</keyword>
<keyword id="KW-0408">Iron</keyword>
<keyword id="KW-0472">Membrane</keyword>
<keyword id="KW-0479">Metal-binding</keyword>
<keyword id="KW-0503">Monooxygenase</keyword>
<keyword id="KW-0560">Oxidoreductase</keyword>
<keyword id="KW-0831">Ubiquinone biosynthesis</keyword>
<name>COQ7_ACIBS</name>
<feature type="chain" id="PRO_1000187042" description="3-demethoxyubiquinol 3-hydroxylase">
    <location>
        <begin position="1"/>
        <end position="211"/>
    </location>
</feature>
<feature type="binding site" evidence="1">
    <location>
        <position position="60"/>
    </location>
    <ligand>
        <name>Fe cation</name>
        <dbReference type="ChEBI" id="CHEBI:24875"/>
        <label>1</label>
    </ligand>
</feature>
<feature type="binding site" evidence="1">
    <location>
        <position position="90"/>
    </location>
    <ligand>
        <name>Fe cation</name>
        <dbReference type="ChEBI" id="CHEBI:24875"/>
        <label>1</label>
    </ligand>
</feature>
<feature type="binding site" evidence="1">
    <location>
        <position position="90"/>
    </location>
    <ligand>
        <name>Fe cation</name>
        <dbReference type="ChEBI" id="CHEBI:24875"/>
        <label>2</label>
    </ligand>
</feature>
<feature type="binding site" evidence="1">
    <location>
        <position position="93"/>
    </location>
    <ligand>
        <name>Fe cation</name>
        <dbReference type="ChEBI" id="CHEBI:24875"/>
        <label>1</label>
    </ligand>
</feature>
<feature type="binding site" evidence="1">
    <location>
        <position position="142"/>
    </location>
    <ligand>
        <name>Fe cation</name>
        <dbReference type="ChEBI" id="CHEBI:24875"/>
        <label>2</label>
    </ligand>
</feature>
<feature type="binding site" evidence="1">
    <location>
        <position position="174"/>
    </location>
    <ligand>
        <name>Fe cation</name>
        <dbReference type="ChEBI" id="CHEBI:24875"/>
        <label>1</label>
    </ligand>
</feature>
<feature type="binding site" evidence="1">
    <location>
        <position position="174"/>
    </location>
    <ligand>
        <name>Fe cation</name>
        <dbReference type="ChEBI" id="CHEBI:24875"/>
        <label>2</label>
    </ligand>
</feature>
<feature type="binding site" evidence="1">
    <location>
        <position position="177"/>
    </location>
    <ligand>
        <name>Fe cation</name>
        <dbReference type="ChEBI" id="CHEBI:24875"/>
        <label>2</label>
    </ligand>
</feature>
<evidence type="ECO:0000255" key="1">
    <source>
        <dbReference type="HAMAP-Rule" id="MF_01658"/>
    </source>
</evidence>
<gene>
    <name evidence="1" type="primary">coq7</name>
    <name type="ordered locus">ABSDF1605</name>
</gene>
<comment type="function">
    <text evidence="1">Catalyzes the hydroxylation of 2-nonaprenyl-3-methyl-6-methoxy-1,4-benzoquinol during ubiquinone biosynthesis.</text>
</comment>
<comment type="catalytic activity">
    <reaction evidence="1">
        <text>a 5-methoxy-2-methyl-3-(all-trans-polyprenyl)benzene-1,4-diol + AH2 + O2 = a 3-demethylubiquinol + A + H2O</text>
        <dbReference type="Rhea" id="RHEA:50908"/>
        <dbReference type="Rhea" id="RHEA-COMP:10859"/>
        <dbReference type="Rhea" id="RHEA-COMP:10914"/>
        <dbReference type="ChEBI" id="CHEBI:13193"/>
        <dbReference type="ChEBI" id="CHEBI:15377"/>
        <dbReference type="ChEBI" id="CHEBI:15379"/>
        <dbReference type="ChEBI" id="CHEBI:17499"/>
        <dbReference type="ChEBI" id="CHEBI:84167"/>
        <dbReference type="ChEBI" id="CHEBI:84422"/>
        <dbReference type="EC" id="1.14.99.60"/>
    </reaction>
</comment>
<comment type="cofactor">
    <cofactor evidence="1">
        <name>Fe cation</name>
        <dbReference type="ChEBI" id="CHEBI:24875"/>
    </cofactor>
    <text evidence="1">Binds 2 iron ions per subunit.</text>
</comment>
<comment type="pathway">
    <text evidence="1">Cofactor biosynthesis; ubiquinone biosynthesis.</text>
</comment>
<comment type="subcellular location">
    <subcellularLocation>
        <location evidence="1">Cell membrane</location>
        <topology evidence="1">Peripheral membrane protein</topology>
    </subcellularLocation>
</comment>
<comment type="similarity">
    <text evidence="1">Belongs to the COQ7 family.</text>
</comment>
<proteinExistence type="inferred from homology"/>
<sequence length="211" mass="23556">MRHYTGIDQLINSFDQALRSLVPGATAAQRQNPAETVEAKLGVEDARHVAGLMRVNHSGEVCAQALYHGQALTAKLPNVRREMQQAAIEEQDHLAWCEDRLKELNSHTSLLNPIWYGLSYGMGALAGIAGDKYSLGFVAETERQVSLHLQDHLNQLPAQDERSRKILEQMNEDELHHRHTALEAGGVELPYAVKITMTAISKLMTKTSYYL</sequence>
<accession>B0VM45</accession>
<dbReference type="EC" id="1.14.99.60" evidence="1"/>
<dbReference type="EMBL" id="CU468230">
    <property type="protein sequence ID" value="CAP00945.1"/>
    <property type="molecule type" value="Genomic_DNA"/>
</dbReference>
<dbReference type="SMR" id="B0VM45"/>
<dbReference type="KEGG" id="abm:ABSDF1605"/>
<dbReference type="HOGENOM" id="CLU_088601_0_0_6"/>
<dbReference type="UniPathway" id="UPA00232"/>
<dbReference type="Proteomes" id="UP000001741">
    <property type="component" value="Chromosome"/>
</dbReference>
<dbReference type="GO" id="GO:0005886">
    <property type="term" value="C:plasma membrane"/>
    <property type="evidence" value="ECO:0007669"/>
    <property type="project" value="UniProtKB-SubCell"/>
</dbReference>
<dbReference type="GO" id="GO:0008682">
    <property type="term" value="F:3-demethoxyubiquinol 3-hydroxylase activity"/>
    <property type="evidence" value="ECO:0007669"/>
    <property type="project" value="UniProtKB-EC"/>
</dbReference>
<dbReference type="GO" id="GO:0046872">
    <property type="term" value="F:metal ion binding"/>
    <property type="evidence" value="ECO:0007669"/>
    <property type="project" value="UniProtKB-KW"/>
</dbReference>
<dbReference type="GO" id="GO:0006744">
    <property type="term" value="P:ubiquinone biosynthetic process"/>
    <property type="evidence" value="ECO:0007669"/>
    <property type="project" value="UniProtKB-UniRule"/>
</dbReference>
<dbReference type="CDD" id="cd01042">
    <property type="entry name" value="DMQH"/>
    <property type="match status" value="1"/>
</dbReference>
<dbReference type="Gene3D" id="1.20.1260.10">
    <property type="match status" value="1"/>
</dbReference>
<dbReference type="HAMAP" id="MF_01658">
    <property type="entry name" value="COQ7"/>
    <property type="match status" value="1"/>
</dbReference>
<dbReference type="InterPro" id="IPR047809">
    <property type="entry name" value="COQ7_proteobact"/>
</dbReference>
<dbReference type="InterPro" id="IPR012347">
    <property type="entry name" value="Ferritin-like"/>
</dbReference>
<dbReference type="InterPro" id="IPR009078">
    <property type="entry name" value="Ferritin-like_SF"/>
</dbReference>
<dbReference type="InterPro" id="IPR011566">
    <property type="entry name" value="Ubq_synth_Coq7"/>
</dbReference>
<dbReference type="NCBIfam" id="NF033656">
    <property type="entry name" value="DMQ_monoox_COQ7"/>
    <property type="match status" value="1"/>
</dbReference>
<dbReference type="PANTHER" id="PTHR11237:SF4">
    <property type="entry name" value="5-DEMETHOXYUBIQUINONE HYDROXYLASE, MITOCHONDRIAL"/>
    <property type="match status" value="1"/>
</dbReference>
<dbReference type="PANTHER" id="PTHR11237">
    <property type="entry name" value="COENZYME Q10 BIOSYNTHESIS PROTEIN 7"/>
    <property type="match status" value="1"/>
</dbReference>
<dbReference type="Pfam" id="PF03232">
    <property type="entry name" value="COQ7"/>
    <property type="match status" value="1"/>
</dbReference>
<dbReference type="SUPFAM" id="SSF47240">
    <property type="entry name" value="Ferritin-like"/>
    <property type="match status" value="1"/>
</dbReference>